<proteinExistence type="inferred from homology"/>
<sequence>MLATHTRTVFYISDGTGITAETFGNAILAQFDIRPRHVRLPFIDTEDKAHQVVRQINHTAELEGKKPIVFTTLVNMSVLKIIEDGCRGMLLDMFGTFIRPLESELGVKSHHRVGRFSDISVSKEYSDRIEAINFSLDHDDGQSHRDLSGADVILIGVSRSGKTPTSLYLAMQCGLKVANYPLIPEDFERRQLPPALVPHRKKIFGLTIDPQRLSQIRNERRPGSRYADLVNCRNEVAEAEAMMRRSGIRWLSTTTKSIEEIATTILQEVRPERLQY</sequence>
<feature type="chain" id="PRO_0000316627" description="Putative phosphoenolpyruvate synthase regulatory protein">
    <location>
        <begin position="1"/>
        <end position="276"/>
    </location>
</feature>
<feature type="binding site" evidence="1">
    <location>
        <begin position="156"/>
        <end position="163"/>
    </location>
    <ligand>
        <name>ADP</name>
        <dbReference type="ChEBI" id="CHEBI:456216"/>
    </ligand>
</feature>
<keyword id="KW-0418">Kinase</keyword>
<keyword id="KW-0547">Nucleotide-binding</keyword>
<keyword id="KW-0723">Serine/threonine-protein kinase</keyword>
<keyword id="KW-0808">Transferase</keyword>
<gene>
    <name type="ordered locus">Ajs_2880</name>
</gene>
<evidence type="ECO:0000255" key="1">
    <source>
        <dbReference type="HAMAP-Rule" id="MF_01062"/>
    </source>
</evidence>
<protein>
    <recommendedName>
        <fullName evidence="1">Putative phosphoenolpyruvate synthase regulatory protein</fullName>
        <shortName evidence="1">PEP synthase regulatory protein</shortName>
        <shortName evidence="1">PSRP</shortName>
        <ecNumber evidence="1">2.7.11.33</ecNumber>
        <ecNumber evidence="1">2.7.4.28</ecNumber>
    </recommendedName>
    <alternativeName>
        <fullName evidence="1">Pyruvate, water dikinase regulatory protein</fullName>
    </alternativeName>
</protein>
<comment type="function">
    <text evidence="1">Bifunctional serine/threonine kinase and phosphorylase involved in the regulation of the phosphoenolpyruvate synthase (PEPS) by catalyzing its phosphorylation/dephosphorylation.</text>
</comment>
<comment type="catalytic activity">
    <reaction evidence="1">
        <text>[pyruvate, water dikinase] + ADP = [pyruvate, water dikinase]-phosphate + AMP + H(+)</text>
        <dbReference type="Rhea" id="RHEA:46020"/>
        <dbReference type="Rhea" id="RHEA-COMP:11425"/>
        <dbReference type="Rhea" id="RHEA-COMP:11426"/>
        <dbReference type="ChEBI" id="CHEBI:15378"/>
        <dbReference type="ChEBI" id="CHEBI:43176"/>
        <dbReference type="ChEBI" id="CHEBI:68546"/>
        <dbReference type="ChEBI" id="CHEBI:456215"/>
        <dbReference type="ChEBI" id="CHEBI:456216"/>
        <dbReference type="EC" id="2.7.11.33"/>
    </reaction>
</comment>
<comment type="catalytic activity">
    <reaction evidence="1">
        <text>[pyruvate, water dikinase]-phosphate + phosphate + H(+) = [pyruvate, water dikinase] + diphosphate</text>
        <dbReference type="Rhea" id="RHEA:48580"/>
        <dbReference type="Rhea" id="RHEA-COMP:11425"/>
        <dbReference type="Rhea" id="RHEA-COMP:11426"/>
        <dbReference type="ChEBI" id="CHEBI:15378"/>
        <dbReference type="ChEBI" id="CHEBI:33019"/>
        <dbReference type="ChEBI" id="CHEBI:43176"/>
        <dbReference type="ChEBI" id="CHEBI:43474"/>
        <dbReference type="ChEBI" id="CHEBI:68546"/>
        <dbReference type="EC" id="2.7.4.28"/>
    </reaction>
</comment>
<comment type="similarity">
    <text evidence="1">Belongs to the pyruvate, phosphate/water dikinase regulatory protein family. PSRP subfamily.</text>
</comment>
<organism>
    <name type="scientific">Acidovorax sp. (strain JS42)</name>
    <dbReference type="NCBI Taxonomy" id="232721"/>
    <lineage>
        <taxon>Bacteria</taxon>
        <taxon>Pseudomonadati</taxon>
        <taxon>Pseudomonadota</taxon>
        <taxon>Betaproteobacteria</taxon>
        <taxon>Burkholderiales</taxon>
        <taxon>Comamonadaceae</taxon>
        <taxon>Acidovorax</taxon>
    </lineage>
</organism>
<dbReference type="EC" id="2.7.11.33" evidence="1"/>
<dbReference type="EC" id="2.7.4.28" evidence="1"/>
<dbReference type="EMBL" id="CP000539">
    <property type="protein sequence ID" value="ABM43021.1"/>
    <property type="molecule type" value="Genomic_DNA"/>
</dbReference>
<dbReference type="SMR" id="A1W9U6"/>
<dbReference type="STRING" id="232721.Ajs_2880"/>
<dbReference type="KEGG" id="ajs:Ajs_2880"/>
<dbReference type="eggNOG" id="COG1806">
    <property type="taxonomic scope" value="Bacteria"/>
</dbReference>
<dbReference type="HOGENOM" id="CLU_046206_1_0_4"/>
<dbReference type="Proteomes" id="UP000000645">
    <property type="component" value="Chromosome"/>
</dbReference>
<dbReference type="GO" id="GO:0043531">
    <property type="term" value="F:ADP binding"/>
    <property type="evidence" value="ECO:0007669"/>
    <property type="project" value="UniProtKB-UniRule"/>
</dbReference>
<dbReference type="GO" id="GO:0005524">
    <property type="term" value="F:ATP binding"/>
    <property type="evidence" value="ECO:0007669"/>
    <property type="project" value="InterPro"/>
</dbReference>
<dbReference type="GO" id="GO:0016776">
    <property type="term" value="F:phosphotransferase activity, phosphate group as acceptor"/>
    <property type="evidence" value="ECO:0007669"/>
    <property type="project" value="UniProtKB-UniRule"/>
</dbReference>
<dbReference type="GO" id="GO:0004674">
    <property type="term" value="F:protein serine/threonine kinase activity"/>
    <property type="evidence" value="ECO:0007669"/>
    <property type="project" value="UniProtKB-UniRule"/>
</dbReference>
<dbReference type="HAMAP" id="MF_01062">
    <property type="entry name" value="PSRP"/>
    <property type="match status" value="1"/>
</dbReference>
<dbReference type="InterPro" id="IPR005177">
    <property type="entry name" value="Kinase-pyrophosphorylase"/>
</dbReference>
<dbReference type="InterPro" id="IPR026530">
    <property type="entry name" value="PSRP"/>
</dbReference>
<dbReference type="NCBIfam" id="NF003742">
    <property type="entry name" value="PRK05339.1"/>
    <property type="match status" value="1"/>
</dbReference>
<dbReference type="PANTHER" id="PTHR31756">
    <property type="entry name" value="PYRUVATE, PHOSPHATE DIKINASE REGULATORY PROTEIN 1, CHLOROPLASTIC"/>
    <property type="match status" value="1"/>
</dbReference>
<dbReference type="PANTHER" id="PTHR31756:SF3">
    <property type="entry name" value="PYRUVATE, PHOSPHATE DIKINASE REGULATORY PROTEIN 1, CHLOROPLASTIC"/>
    <property type="match status" value="1"/>
</dbReference>
<dbReference type="Pfam" id="PF03618">
    <property type="entry name" value="Kinase-PPPase"/>
    <property type="match status" value="1"/>
</dbReference>
<name>PSRP_ACISJ</name>
<accession>A1W9U6</accession>
<reference key="1">
    <citation type="submission" date="2006-12" db="EMBL/GenBank/DDBJ databases">
        <title>Complete sequence of chromosome 1 of Acidovorax sp. JS42.</title>
        <authorList>
            <person name="Copeland A."/>
            <person name="Lucas S."/>
            <person name="Lapidus A."/>
            <person name="Barry K."/>
            <person name="Detter J.C."/>
            <person name="Glavina del Rio T."/>
            <person name="Dalin E."/>
            <person name="Tice H."/>
            <person name="Pitluck S."/>
            <person name="Chertkov O."/>
            <person name="Brettin T."/>
            <person name="Bruce D."/>
            <person name="Han C."/>
            <person name="Tapia R."/>
            <person name="Gilna P."/>
            <person name="Schmutz J."/>
            <person name="Larimer F."/>
            <person name="Land M."/>
            <person name="Hauser L."/>
            <person name="Kyrpides N."/>
            <person name="Kim E."/>
            <person name="Stahl D."/>
            <person name="Richardson P."/>
        </authorList>
    </citation>
    <scope>NUCLEOTIDE SEQUENCE [LARGE SCALE GENOMIC DNA]</scope>
    <source>
        <strain>JS42</strain>
    </source>
</reference>